<proteinExistence type="inferred from homology"/>
<dbReference type="EC" id="3.4.23.-"/>
<dbReference type="EC" id="2.7.7.49"/>
<dbReference type="EC" id="2.7.7.7"/>
<dbReference type="EC" id="3.1.26.4"/>
<dbReference type="EMBL" id="Z72812">
    <property type="protein sequence ID" value="CAA97012.1"/>
    <property type="molecule type" value="Genomic_DNA"/>
</dbReference>
<dbReference type="EMBL" id="Z72813">
    <property type="protein sequence ID" value="CAA97014.1"/>
    <property type="molecule type" value="Genomic_DNA"/>
</dbReference>
<dbReference type="EMBL" id="BK006941">
    <property type="protein sequence ID" value="DAA08122.1"/>
    <property type="molecule type" value="Genomic_DNA"/>
</dbReference>
<dbReference type="PIR" id="S40969">
    <property type="entry name" value="S40969"/>
</dbReference>
<dbReference type="PIR" id="S69838">
    <property type="entry name" value="S69838"/>
</dbReference>
<dbReference type="RefSeq" id="NP_058158.1">
    <molecule id="Q12141-1"/>
    <property type="nucleotide sequence ID" value="NM_001184432.2"/>
</dbReference>
<dbReference type="SMR" id="Q12141"/>
<dbReference type="BioGRID" id="33270">
    <property type="interactions" value="9"/>
</dbReference>
<dbReference type="FunCoup" id="Q12141">
    <property type="interactions" value="184"/>
</dbReference>
<dbReference type="IntAct" id="Q12141">
    <property type="interactions" value="6"/>
</dbReference>
<dbReference type="GlyGen" id="Q12141">
    <property type="glycosylation" value="3 sites"/>
</dbReference>
<dbReference type="iPTMnet" id="Q12141"/>
<dbReference type="PaxDb" id="4932-YGR027W-B"/>
<dbReference type="PeptideAtlas" id="Q12141"/>
<dbReference type="GeneID" id="852913"/>
<dbReference type="KEGG" id="sce:YGR027W-B"/>
<dbReference type="AGR" id="SGD:S000007406"/>
<dbReference type="SGD" id="S000007406">
    <property type="gene designation" value="YGR027W-B"/>
</dbReference>
<dbReference type="VEuPathDB" id="FungiDB:YGR027W-B"/>
<dbReference type="eggNOG" id="KOG0017">
    <property type="taxonomic scope" value="Eukaryota"/>
</dbReference>
<dbReference type="HOGENOM" id="CLU_244151_0_0_1"/>
<dbReference type="InParanoid" id="Q12141"/>
<dbReference type="OrthoDB" id="5423336at2759"/>
<dbReference type="Proteomes" id="UP000002311">
    <property type="component" value="Chromosome VII"/>
</dbReference>
<dbReference type="RNAct" id="Q12141">
    <property type="molecule type" value="protein"/>
</dbReference>
<dbReference type="GO" id="GO:0005737">
    <property type="term" value="C:cytoplasm"/>
    <property type="evidence" value="ECO:0007669"/>
    <property type="project" value="UniProtKB-SubCell"/>
</dbReference>
<dbReference type="GO" id="GO:0005634">
    <property type="term" value="C:nucleus"/>
    <property type="evidence" value="ECO:0000314"/>
    <property type="project" value="SGD"/>
</dbReference>
<dbReference type="GO" id="GO:0004190">
    <property type="term" value="F:aspartic-type endopeptidase activity"/>
    <property type="evidence" value="ECO:0007669"/>
    <property type="project" value="UniProtKB-KW"/>
</dbReference>
<dbReference type="GO" id="GO:0005524">
    <property type="term" value="F:ATP binding"/>
    <property type="evidence" value="ECO:0007669"/>
    <property type="project" value="UniProtKB-KW"/>
</dbReference>
<dbReference type="GO" id="GO:0003677">
    <property type="term" value="F:DNA binding"/>
    <property type="evidence" value="ECO:0007669"/>
    <property type="project" value="UniProtKB-KW"/>
</dbReference>
<dbReference type="GO" id="GO:0003887">
    <property type="term" value="F:DNA-directed DNA polymerase activity"/>
    <property type="evidence" value="ECO:0007669"/>
    <property type="project" value="UniProtKB-KW"/>
</dbReference>
<dbReference type="GO" id="GO:0003723">
    <property type="term" value="F:RNA binding"/>
    <property type="evidence" value="ECO:0007669"/>
    <property type="project" value="UniProtKB-KW"/>
</dbReference>
<dbReference type="GO" id="GO:0003964">
    <property type="term" value="F:RNA-directed DNA polymerase activity"/>
    <property type="evidence" value="ECO:0007669"/>
    <property type="project" value="UniProtKB-KW"/>
</dbReference>
<dbReference type="GO" id="GO:0004523">
    <property type="term" value="F:RNA-DNA hybrid ribonuclease activity"/>
    <property type="evidence" value="ECO:0007669"/>
    <property type="project" value="UniProtKB-EC"/>
</dbReference>
<dbReference type="GO" id="GO:0008270">
    <property type="term" value="F:zinc ion binding"/>
    <property type="evidence" value="ECO:0007669"/>
    <property type="project" value="UniProtKB-KW"/>
</dbReference>
<dbReference type="GO" id="GO:0015074">
    <property type="term" value="P:DNA integration"/>
    <property type="evidence" value="ECO:0007669"/>
    <property type="project" value="UniProtKB-KW"/>
</dbReference>
<dbReference type="GO" id="GO:0006310">
    <property type="term" value="P:DNA recombination"/>
    <property type="evidence" value="ECO:0007669"/>
    <property type="project" value="UniProtKB-KW"/>
</dbReference>
<dbReference type="GO" id="GO:0006508">
    <property type="term" value="P:proteolysis"/>
    <property type="evidence" value="ECO:0007669"/>
    <property type="project" value="UniProtKB-KW"/>
</dbReference>
<dbReference type="GO" id="GO:0032196">
    <property type="term" value="P:transposition"/>
    <property type="evidence" value="ECO:0007669"/>
    <property type="project" value="UniProtKB-KW"/>
</dbReference>
<dbReference type="GO" id="GO:0075523">
    <property type="term" value="P:viral translational frameshifting"/>
    <property type="evidence" value="ECO:0007669"/>
    <property type="project" value="UniProtKB-KW"/>
</dbReference>
<dbReference type="CDD" id="cd09272">
    <property type="entry name" value="RNase_HI_RT_Ty1"/>
    <property type="match status" value="1"/>
</dbReference>
<dbReference type="FunFam" id="3.30.420.10:FF:000050">
    <property type="entry name" value="Transposon Ty2-DR3 Gag-Pol polyprotein"/>
    <property type="match status" value="1"/>
</dbReference>
<dbReference type="Gene3D" id="3.30.420.10">
    <property type="entry name" value="Ribonuclease H-like superfamily/Ribonuclease H"/>
    <property type="match status" value="1"/>
</dbReference>
<dbReference type="InterPro" id="IPR001969">
    <property type="entry name" value="Aspartic_peptidase_AS"/>
</dbReference>
<dbReference type="InterPro" id="IPR043502">
    <property type="entry name" value="DNA/RNA_pol_sf"/>
</dbReference>
<dbReference type="InterPro" id="IPR001584">
    <property type="entry name" value="Integrase_cat-core"/>
</dbReference>
<dbReference type="InterPro" id="IPR039537">
    <property type="entry name" value="Retrotran_Ty1/copia-like"/>
</dbReference>
<dbReference type="InterPro" id="IPR012337">
    <property type="entry name" value="RNaseH-like_sf"/>
</dbReference>
<dbReference type="InterPro" id="IPR036397">
    <property type="entry name" value="RNaseH_sf"/>
</dbReference>
<dbReference type="InterPro" id="IPR013103">
    <property type="entry name" value="RVT_2"/>
</dbReference>
<dbReference type="InterPro" id="IPR015820">
    <property type="entry name" value="TYA"/>
</dbReference>
<dbReference type="PANTHER" id="PTHR42648">
    <property type="entry name" value="TRANSPOSASE, PUTATIVE-RELATED"/>
    <property type="match status" value="1"/>
</dbReference>
<dbReference type="PANTHER" id="PTHR42648:SF11">
    <property type="entry name" value="TRANSPOSON TY4-P GAG-POL POLYPROTEIN"/>
    <property type="match status" value="1"/>
</dbReference>
<dbReference type="Pfam" id="PF00665">
    <property type="entry name" value="rve"/>
    <property type="match status" value="1"/>
</dbReference>
<dbReference type="Pfam" id="PF07727">
    <property type="entry name" value="RVT_2"/>
    <property type="match status" value="1"/>
</dbReference>
<dbReference type="Pfam" id="PF01021">
    <property type="entry name" value="TYA"/>
    <property type="match status" value="1"/>
</dbReference>
<dbReference type="SUPFAM" id="SSF56672">
    <property type="entry name" value="DNA/RNA polymerases"/>
    <property type="match status" value="1"/>
</dbReference>
<dbReference type="SUPFAM" id="SSF53098">
    <property type="entry name" value="Ribonuclease H-like"/>
    <property type="match status" value="1"/>
</dbReference>
<dbReference type="PROSITE" id="PS00141">
    <property type="entry name" value="ASP_PROTEASE"/>
    <property type="match status" value="1"/>
</dbReference>
<dbReference type="PROSITE" id="PS50994">
    <property type="entry name" value="INTEGRASE"/>
    <property type="match status" value="1"/>
</dbReference>
<keyword id="KW-0064">Aspartyl protease</keyword>
<keyword id="KW-0067">ATP-binding</keyword>
<keyword id="KW-0963">Cytoplasm</keyword>
<keyword id="KW-0229">DNA integration</keyword>
<keyword id="KW-0233">DNA recombination</keyword>
<keyword id="KW-0238">DNA-binding</keyword>
<keyword id="KW-0239">DNA-directed DNA polymerase</keyword>
<keyword id="KW-0255">Endonuclease</keyword>
<keyword id="KW-0378">Hydrolase</keyword>
<keyword id="KW-0460">Magnesium</keyword>
<keyword id="KW-0479">Metal-binding</keyword>
<keyword id="KW-0511">Multifunctional enzyme</keyword>
<keyword id="KW-0540">Nuclease</keyword>
<keyword id="KW-0547">Nucleotide-binding</keyword>
<keyword id="KW-0548">Nucleotidyltransferase</keyword>
<keyword id="KW-0539">Nucleus</keyword>
<keyword id="KW-0597">Phosphoprotein</keyword>
<keyword id="KW-0645">Protease</keyword>
<keyword id="KW-1185">Reference proteome</keyword>
<keyword id="KW-0688">Ribosomal frameshifting</keyword>
<keyword id="KW-0694">RNA-binding</keyword>
<keyword id="KW-0695">RNA-directed DNA polymerase</keyword>
<keyword id="KW-0808">Transferase</keyword>
<keyword id="KW-0814">Transposable element</keyword>
<keyword id="KW-0815">Transposition</keyword>
<keyword id="KW-1188">Viral release from host cell</keyword>
<keyword id="KW-0917">Virion maturation</keyword>
<keyword id="KW-0862">Zinc</keyword>
<keyword id="KW-0863">Zinc-finger</keyword>
<gene>
    <name type="primary">TY1B-GR1</name>
    <name type="synonym">YGRWTy1-1 POL</name>
    <name type="ordered locus">YGR027W-B</name>
    <name type="ORF">G4054</name>
</gene>
<protein>
    <recommendedName>
        <fullName>Transposon Ty1-GR1 Gag-Pol polyprotein</fullName>
    </recommendedName>
    <alternativeName>
        <fullName>Gag-Pol-p199</fullName>
    </alternativeName>
    <alternativeName>
        <fullName>TY1A-TY1B</fullName>
    </alternativeName>
    <alternativeName>
        <fullName>Transposon Ty1 TYA-TYB polyprotein</fullName>
    </alternativeName>
    <alternativeName>
        <fullName>p190</fullName>
    </alternativeName>
    <component>
        <recommendedName>
            <fullName>Capsid protein</fullName>
            <shortName>CA</shortName>
        </recommendedName>
        <alternativeName>
            <fullName>Gag-p45</fullName>
        </alternativeName>
        <alternativeName>
            <fullName>p54</fullName>
        </alternativeName>
    </component>
    <component>
        <recommendedName>
            <fullName>Ty1 protease</fullName>
            <shortName>PR</shortName>
            <ecNumber>3.4.23.-</ecNumber>
        </recommendedName>
        <alternativeName>
            <fullName>Pol-p20</fullName>
        </alternativeName>
        <alternativeName>
            <fullName>p23</fullName>
        </alternativeName>
    </component>
    <component>
        <recommendedName>
            <fullName>Integrase</fullName>
            <shortName>IN</shortName>
        </recommendedName>
        <alternativeName>
            <fullName>Pol-p71</fullName>
        </alternativeName>
        <alternativeName>
            <fullName>p84</fullName>
        </alternativeName>
        <alternativeName>
            <fullName>p90</fullName>
        </alternativeName>
    </component>
    <component>
        <recommendedName>
            <fullName>Reverse transcriptase/ribonuclease H</fullName>
            <shortName>RT</shortName>
            <shortName>RT-RH</shortName>
            <ecNumber>2.7.7.49</ecNumber>
            <ecNumber>2.7.7.7</ecNumber>
            <ecNumber>3.1.26.4</ecNumber>
        </recommendedName>
        <alternativeName>
            <fullName>Pol-p63</fullName>
        </alternativeName>
        <alternativeName>
            <fullName>p60</fullName>
        </alternativeName>
    </component>
</protein>
<accession>Q12141</accession>
<accession>D6VUG1</accession>
<sequence>MESQQLSQHSHISHGSACASVTSKEVHTNQDPLDVSASKTEECEKASTKANSQQTTTPASSAVPENPHHASPQTAQSHSPQNGPYPQQCMMTQNQANPSGWSFYGHPSMIPYTPYQMSPMYFPPGPQSQFPQYPSSVGTPLSTPSPESGNTFTDSSSADSDMTSTKKYVRPPPMLTSPNDFPNWVKTYIKFLQNSNLGGIIPTVNGKPVRQITDDELTFLYNTFQIFAPSQFLPTWVKDILSVDYTDIMKILSKSIEKMQSDTQEANDIVTLANLQYNGSTPADAFETKVTNIIDRLNNNGIHINNKVACQLIMRGLSGEYKFLRYTRHRHLNMTVAELFLDIHAIYEEQQGSRNSKPNYRRNLSDEKNDSRSYTNTTKPKVIARNPQKTNNSKSKTARAHNVSTSNNSPSTDNDSISKSTTEPIQLNNKHDLHLGQELTESTVNHTNHSDDELPGHLLLDSGASRTLIRSAHHIHSASSNPDINVVDAQKRNIPINAIGDLQFHFQDNTKTSIKVLHTPNIAYDLLSLNELAAVDITACFTKNVLERSDGTVLAPIVQYGDFYWVSKRYLLPSNISVPTINNVHTSESTRKYPYPFIHRMLAHANAQTIRYSLKNNTITYFNESDVDWSSAIDYQCPDCLIGKSTKHRHIKGSRLKYQNSYEPFQYLHTDIFGPVHNLPKSAPSYFISFTDETTKFRWVYPLHDRREDSILDVFTTILAFIKNQFQASVLVIQMDRGSEYTNRTLHKFLEKNGITPCYTTTADSRAHGVAERLNRTLLDDCRTQLQCSGLPNHLWFSAIEFSTIVRNSLASPKSKKSARQHAGLAGLDISTLLPFGQPVIVNDHNPNSKIHPRGIPGYALHPSRNSYGYIIYLPSLKKTVDTTNYVILQGKESRLDQFNYDALTFDEDLNRLTASYHSFIASNEIQESNDLNIESDHDFQSDIELHPEQPRNVLSKAVSPTDSTPPSTHTEDSKRVSKTNIRAPREVDPNISESNILPSKKRSSTPQISNIESTGSGGMHKLNVPLLAPMSQSNTHESSHASKSKDFRHSDSYSENETNHTNVPISSTGGTNNKTVPQISDQETEKRIIHRSPSIDASPPENNSSHNIVPIKTPTTVSEQNTEESIIADLPLPDLPPESPTEFPDPFKELPPINSRQTNSSLGGIGDSNAYTTINSKKRSLEDNETEIKVSRDTWNTKNMRSLEPPRSKKRIHLIAAVKAVKSIKPIRTTLRYDEAITYNKDIKEKEKYIEAYHKEVNQLLKMKTWDTDEYYDRKEIDPKRVINSMFIFNKKRDGTHKARFVARGDIQHPDTYDSGMQSNTVHHYALMTSLSLALDNNYYITQLDISSAYLYADIKEELYIRPPPHLGMNDKLIRLKKSLYGLKQSGANWYETIKSYLIQQCGMEEVRGWSCVFKNSQVTICLFVDDMVLFSKNLNSNKRIIDKLKMQYDTKIINLGESDEEIQYDILGLEIKYQRGKYMKLGMENSLTEKIPKLNVPLNPKGRKLSAPGQPGLYIDQQELELEEDDYKMKVHEMQKLIGLASYVGYKFRFDLLYYINTLAQHILFPSKQVLDMTYELIQFIWNTRDKQLIWHKSKPVKPTNKLVVISDASYGNQPYYKSQIGNIYLLNGKVIGGKSTKASLTCTSTTEAEIHAISESVPLLNNLSYLIQELDKKPITKGLLTDSKSTISIIISNNEEKFRNRFFGTKAMRLRDEVSGNHLHVCYIETKKNIADVMTKPLPIKTFKLLTNKWIH</sequence>
<reference key="1">
    <citation type="journal article" date="1997" name="Nature">
        <title>The nucleotide sequence of Saccharomyces cerevisiae chromosome VII.</title>
        <authorList>
            <person name="Tettelin H."/>
            <person name="Agostoni-Carbone M.L."/>
            <person name="Albermann K."/>
            <person name="Albers M."/>
            <person name="Arroyo J."/>
            <person name="Backes U."/>
            <person name="Barreiros T."/>
            <person name="Bertani I."/>
            <person name="Bjourson A.J."/>
            <person name="Brueckner M."/>
            <person name="Bruschi C.V."/>
            <person name="Carignani G."/>
            <person name="Castagnoli L."/>
            <person name="Cerdan E."/>
            <person name="Clemente M.L."/>
            <person name="Coblenz A."/>
            <person name="Coglievina M."/>
            <person name="Coissac E."/>
            <person name="Defoor E."/>
            <person name="Del Bino S."/>
            <person name="Delius H."/>
            <person name="Delneri D."/>
            <person name="de Wergifosse P."/>
            <person name="Dujon B."/>
            <person name="Durand P."/>
            <person name="Entian K.-D."/>
            <person name="Eraso P."/>
            <person name="Escribano V."/>
            <person name="Fabiani L."/>
            <person name="Fartmann B."/>
            <person name="Feroli F."/>
            <person name="Feuermann M."/>
            <person name="Frontali L."/>
            <person name="Garcia-Gonzalez M."/>
            <person name="Garcia-Saez M.I."/>
            <person name="Goffeau A."/>
            <person name="Guerreiro P."/>
            <person name="Hani J."/>
            <person name="Hansen M."/>
            <person name="Hebling U."/>
            <person name="Hernandez K."/>
            <person name="Heumann K."/>
            <person name="Hilger F."/>
            <person name="Hofmann B."/>
            <person name="Indge K.J."/>
            <person name="James C.M."/>
            <person name="Klima R."/>
            <person name="Koetter P."/>
            <person name="Kramer B."/>
            <person name="Kramer W."/>
            <person name="Lauquin G."/>
            <person name="Leuther H."/>
            <person name="Louis E.J."/>
            <person name="Maillier E."/>
            <person name="Marconi A."/>
            <person name="Martegani E."/>
            <person name="Mazon M.J."/>
            <person name="Mazzoni C."/>
            <person name="McReynolds A.D.K."/>
            <person name="Melchioretto P."/>
            <person name="Mewes H.-W."/>
            <person name="Minenkova O."/>
            <person name="Mueller-Auer S."/>
            <person name="Nawrocki A."/>
            <person name="Netter P."/>
            <person name="Neu R."/>
            <person name="Nombela C."/>
            <person name="Oliver S.G."/>
            <person name="Panzeri L."/>
            <person name="Paoluzi S."/>
            <person name="Plevani P."/>
            <person name="Portetelle D."/>
            <person name="Portillo F."/>
            <person name="Potier S."/>
            <person name="Purnelle B."/>
            <person name="Rieger M."/>
            <person name="Riles L."/>
            <person name="Rinaldi T."/>
            <person name="Robben J."/>
            <person name="Rodrigues-Pousada C."/>
            <person name="Rodriguez-Belmonte E."/>
            <person name="Rodriguez-Torres A.M."/>
            <person name="Rose M."/>
            <person name="Ruzzi M."/>
            <person name="Saliola M."/>
            <person name="Sanchez-Perez M."/>
            <person name="Schaefer B."/>
            <person name="Schaefer M."/>
            <person name="Scharfe M."/>
            <person name="Schmidheini T."/>
            <person name="Schreer A."/>
            <person name="Skala J."/>
            <person name="Souciet J.-L."/>
            <person name="Steensma H.Y."/>
            <person name="Talla E."/>
            <person name="Thierry A."/>
            <person name="Vandenbol M."/>
            <person name="van der Aart Q.J.M."/>
            <person name="Van Dyck L."/>
            <person name="Vanoni M."/>
            <person name="Verhasselt P."/>
            <person name="Voet M."/>
            <person name="Volckaert G."/>
            <person name="Wambutt R."/>
            <person name="Watson M.D."/>
            <person name="Weber N."/>
            <person name="Wedler E."/>
            <person name="Wedler H."/>
            <person name="Wipfli P."/>
            <person name="Wolf K."/>
            <person name="Wright L.F."/>
            <person name="Zaccaria P."/>
            <person name="Zimmermann M."/>
            <person name="Zollner A."/>
            <person name="Kleine K."/>
        </authorList>
    </citation>
    <scope>NUCLEOTIDE SEQUENCE [LARGE SCALE GENOMIC DNA]</scope>
    <source>
        <strain>ATCC 204508 / S288c</strain>
    </source>
</reference>
<reference key="2">
    <citation type="journal article" date="2014" name="G3 (Bethesda)">
        <title>The reference genome sequence of Saccharomyces cerevisiae: Then and now.</title>
        <authorList>
            <person name="Engel S.R."/>
            <person name="Dietrich F.S."/>
            <person name="Fisk D.G."/>
            <person name="Binkley G."/>
            <person name="Balakrishnan R."/>
            <person name="Costanzo M.C."/>
            <person name="Dwight S.S."/>
            <person name="Hitz B.C."/>
            <person name="Karra K."/>
            <person name="Nash R.S."/>
            <person name="Weng S."/>
            <person name="Wong E.D."/>
            <person name="Lloyd P."/>
            <person name="Skrzypek M.S."/>
            <person name="Miyasato S.R."/>
            <person name="Simison M."/>
            <person name="Cherry J.M."/>
        </authorList>
    </citation>
    <scope>GENOME REANNOTATION</scope>
    <source>
        <strain>ATCC 204508 / S288c</strain>
    </source>
</reference>
<reference key="3">
    <citation type="journal article" date="1998" name="Genome Res.">
        <title>Transposable elements and genome organization: a comprehensive survey of retrotransposons revealed by the complete Saccharomyces cerevisiae genome sequence.</title>
        <authorList>
            <person name="Kim J.M."/>
            <person name="Vanguri S."/>
            <person name="Boeke J.D."/>
            <person name="Gabriel A."/>
            <person name="Voytas D.F."/>
        </authorList>
    </citation>
    <scope>NOMENCLATURE</scope>
</reference>
<reference key="4">
    <citation type="journal article" date="2005" name="Cytogenet. Genome Res.">
        <title>Happy together: the life and times of Ty retrotransposons and their hosts.</title>
        <authorList>
            <person name="Lesage P."/>
            <person name="Todeschini A.L."/>
        </authorList>
    </citation>
    <scope>REVIEW</scope>
</reference>
<reference key="5">
    <citation type="journal article" date="2005" name="Cytogenet. Genome Res.">
        <title>Reverse transcriptase and integrase of the Saccharomyces cerevisiae Ty1 element.</title>
        <authorList>
            <person name="Wilhelm F.-X."/>
            <person name="Wilhelm M."/>
            <person name="Gabriel A."/>
        </authorList>
    </citation>
    <scope>REVIEW</scope>
    <scope>DOMAINS</scope>
</reference>
<name>YG11B_YEAST</name>
<evidence type="ECO:0000250" key="1"/>
<evidence type="ECO:0000250" key="2">
    <source>
        <dbReference type="UniProtKB" id="Q99231"/>
    </source>
</evidence>
<evidence type="ECO:0000255" key="3">
    <source>
        <dbReference type="PROSITE-ProRule" id="PRU00457"/>
    </source>
</evidence>
<evidence type="ECO:0000255" key="4">
    <source>
        <dbReference type="PROSITE-ProRule" id="PRU10094"/>
    </source>
</evidence>
<evidence type="ECO:0000256" key="5">
    <source>
        <dbReference type="SAM" id="MobiDB-lite"/>
    </source>
</evidence>
<feature type="chain" id="PRO_0000279053" description="Transposon Ty1-GR1 Gag-Pol polyprotein">
    <location>
        <begin position="1"/>
        <end position="1755"/>
    </location>
</feature>
<feature type="chain" id="PRO_0000279054" description="Capsid protein" evidence="1">
    <location>
        <begin position="1"/>
        <end position="401"/>
    </location>
</feature>
<feature type="chain" id="PRO_0000279055" description="Ty1 protease" evidence="1">
    <location>
        <begin position="402"/>
        <end position="582"/>
    </location>
</feature>
<feature type="chain" id="PRO_0000279056" description="Integrase" evidence="1">
    <location>
        <begin position="583"/>
        <end position="1217"/>
    </location>
</feature>
<feature type="chain" id="PRO_0000279057" description="Reverse transcriptase/ribonuclease H" evidence="1">
    <location>
        <begin position="1218"/>
        <end position="1755"/>
    </location>
</feature>
<feature type="domain" description="Integrase catalytic" evidence="3">
    <location>
        <begin position="660"/>
        <end position="835"/>
    </location>
</feature>
<feature type="domain" description="Reverse transcriptase Ty1/copia-type">
    <location>
        <begin position="1338"/>
        <end position="1476"/>
    </location>
</feature>
<feature type="domain" description="RNase H Ty1/copia-type">
    <location>
        <begin position="1610"/>
        <end position="1752"/>
    </location>
</feature>
<feature type="region of interest" description="Disordered" evidence="5">
    <location>
        <begin position="1"/>
        <end position="93"/>
    </location>
</feature>
<feature type="region of interest" description="Disordered" evidence="5">
    <location>
        <begin position="126"/>
        <end position="173"/>
    </location>
</feature>
<feature type="region of interest" description="RNA-binding" evidence="1">
    <location>
        <begin position="299"/>
        <end position="401"/>
    </location>
</feature>
<feature type="region of interest" description="Disordered" evidence="5">
    <location>
        <begin position="352"/>
        <end position="421"/>
    </location>
</feature>
<feature type="region of interest" description="Integrase-type zinc finger-like">
    <location>
        <begin position="583"/>
        <end position="640"/>
    </location>
</feature>
<feature type="region of interest" description="Disordered" evidence="5">
    <location>
        <begin position="956"/>
        <end position="1087"/>
    </location>
</feature>
<feature type="region of interest" description="Disordered" evidence="5">
    <location>
        <begin position="1092"/>
        <end position="1111"/>
    </location>
</feature>
<feature type="region of interest" description="Disordered" evidence="5">
    <location>
        <begin position="1130"/>
        <end position="1187"/>
    </location>
</feature>
<feature type="short sequence motif" description="Bipartite nuclear localization signal" evidence="1">
    <location>
        <begin position="1178"/>
        <end position="1212"/>
    </location>
</feature>
<feature type="compositionally biased region" description="Low complexity" evidence="5">
    <location>
        <begin position="1"/>
        <end position="16"/>
    </location>
</feature>
<feature type="compositionally biased region" description="Polar residues" evidence="5">
    <location>
        <begin position="48"/>
        <end position="60"/>
    </location>
</feature>
<feature type="compositionally biased region" description="Polar residues" evidence="5">
    <location>
        <begin position="71"/>
        <end position="93"/>
    </location>
</feature>
<feature type="compositionally biased region" description="Polar residues" evidence="5">
    <location>
        <begin position="127"/>
        <end position="152"/>
    </location>
</feature>
<feature type="compositionally biased region" description="Low complexity" evidence="5">
    <location>
        <begin position="153"/>
        <end position="165"/>
    </location>
</feature>
<feature type="compositionally biased region" description="Low complexity" evidence="5">
    <location>
        <begin position="402"/>
        <end position="418"/>
    </location>
</feature>
<feature type="compositionally biased region" description="Low complexity" evidence="5">
    <location>
        <begin position="960"/>
        <end position="969"/>
    </location>
</feature>
<feature type="compositionally biased region" description="Polar residues" evidence="5">
    <location>
        <begin position="1005"/>
        <end position="1015"/>
    </location>
</feature>
<feature type="compositionally biased region" description="Basic and acidic residues" evidence="5">
    <location>
        <begin position="1038"/>
        <end position="1053"/>
    </location>
</feature>
<feature type="compositionally biased region" description="Polar residues" evidence="5">
    <location>
        <begin position="1054"/>
        <end position="1082"/>
    </location>
</feature>
<feature type="compositionally biased region" description="Polar residues" evidence="5">
    <location>
        <begin position="1101"/>
        <end position="1111"/>
    </location>
</feature>
<feature type="active site" description="For protease activity; shared with dimeric partner" evidence="4">
    <location>
        <position position="461"/>
    </location>
</feature>
<feature type="binding site" evidence="3">
    <location>
        <position position="671"/>
    </location>
    <ligand>
        <name>Mg(2+)</name>
        <dbReference type="ChEBI" id="CHEBI:18420"/>
        <label>1</label>
        <note>catalytic; for integrase activity</note>
    </ligand>
</feature>
<feature type="binding site" evidence="3">
    <location>
        <position position="736"/>
    </location>
    <ligand>
        <name>Mg(2+)</name>
        <dbReference type="ChEBI" id="CHEBI:18420"/>
        <label>1</label>
        <note>catalytic; for integrase activity</note>
    </ligand>
</feature>
<feature type="binding site" evidence="3">
    <location>
        <position position="1346"/>
    </location>
    <ligand>
        <name>Mg(2+)</name>
        <dbReference type="ChEBI" id="CHEBI:18420"/>
        <label>2</label>
        <note>catalytic; for reverse transcriptase activity</note>
    </ligand>
</feature>
<feature type="binding site" evidence="3">
    <location>
        <position position="1427"/>
    </location>
    <ligand>
        <name>Mg(2+)</name>
        <dbReference type="ChEBI" id="CHEBI:18420"/>
        <label>2</label>
        <note>catalytic; for reverse transcriptase activity</note>
    </ligand>
</feature>
<feature type="binding site" evidence="3">
    <location>
        <position position="1428"/>
    </location>
    <ligand>
        <name>Mg(2+)</name>
        <dbReference type="ChEBI" id="CHEBI:18420"/>
        <label>2</label>
        <note>catalytic; for reverse transcriptase activity</note>
    </ligand>
</feature>
<feature type="binding site" evidence="3">
    <location>
        <position position="1610"/>
    </location>
    <ligand>
        <name>Mg(2+)</name>
        <dbReference type="ChEBI" id="CHEBI:18420"/>
        <label>3</label>
        <note>catalytic; for RNase H activity</note>
    </ligand>
</feature>
<feature type="binding site" evidence="3">
    <location>
        <position position="1652"/>
    </location>
    <ligand>
        <name>Mg(2+)</name>
        <dbReference type="ChEBI" id="CHEBI:18420"/>
        <label>3</label>
        <note>catalytic; for RNase H activity</note>
    </ligand>
</feature>
<feature type="binding site" evidence="3">
    <location>
        <position position="1685"/>
    </location>
    <ligand>
        <name>Mg(2+)</name>
        <dbReference type="ChEBI" id="CHEBI:18420"/>
        <label>3</label>
        <note>catalytic; for RNase H activity</note>
    </ligand>
</feature>
<feature type="site" description="Cleavage; by Ty1 protease" evidence="1">
    <location>
        <begin position="401"/>
        <end position="402"/>
    </location>
</feature>
<feature type="site" description="Cleavage; by Ty1 protease" evidence="1">
    <location>
        <begin position="582"/>
        <end position="583"/>
    </location>
</feature>
<feature type="site" description="Cleavage; by Ty1 protease" evidence="1">
    <location>
        <begin position="1217"/>
        <end position="1218"/>
    </location>
</feature>
<feature type="modified residue" description="Phosphoserine" evidence="2">
    <location>
        <position position="416"/>
    </location>
</feature>
<organism>
    <name type="scientific">Saccharomyces cerevisiae (strain ATCC 204508 / S288c)</name>
    <name type="common">Baker's yeast</name>
    <dbReference type="NCBI Taxonomy" id="559292"/>
    <lineage>
        <taxon>Eukaryota</taxon>
        <taxon>Fungi</taxon>
        <taxon>Dikarya</taxon>
        <taxon>Ascomycota</taxon>
        <taxon>Saccharomycotina</taxon>
        <taxon>Saccharomycetes</taxon>
        <taxon>Saccharomycetales</taxon>
        <taxon>Saccharomycetaceae</taxon>
        <taxon>Saccharomyces</taxon>
    </lineage>
</organism>
<comment type="function">
    <text evidence="1">Capsid protein (CA) is the structural component of the virus-like particle (VLP), forming the shell that encapsulates the retrotransposons dimeric RNA genome. The particles are assembled from trimer-clustered units and there are holes in the capsid shells that allow for the diffusion of macromolecules. CA also has nucleocapsid-like chaperone activity, promoting primer tRNA(i)-Met annealing to the multipartite primer-binding site (PBS), dimerization of Ty1 RNA and initiation of reverse transcription (By similarity).</text>
</comment>
<comment type="function">
    <text evidence="1">The aspartyl protease (PR) mediates the proteolytic cleavages of the Gag and Gag-Pol polyproteins after assembly of the VLP.</text>
</comment>
<comment type="function">
    <text evidence="1">Reverse transcriptase/ribonuclease H (RT) is a multifunctional enzyme that catalyzes the conversion of the retro-elements RNA genome into dsDNA within the VLP. The enzyme displays a DNA polymerase activity that can copy either DNA or RNA templates, and a ribonuclease H (RNase H) activity that cleaves the RNA strand of RNA-DNA heteroduplexes during plus-strand synthesis and hydrolyzes RNA primers. The conversion leads to a linear dsDNA copy of the retrotransposon that includes long terminal repeats (LTRs) at both ends (By similarity).</text>
</comment>
<comment type="function">
    <text evidence="1">Integrase (IN) targets the VLP to the nucleus, where a subparticle preintegration complex (PIC) containing at least integrase and the newly synthesized dsDNA copy of the retrotransposon must transit the nuclear membrane. Once in the nucleus, integrase performs the integration of the dsDNA into the host genome (By similarity).</text>
</comment>
<comment type="catalytic activity">
    <reaction>
        <text>DNA(n) + a 2'-deoxyribonucleoside 5'-triphosphate = DNA(n+1) + diphosphate</text>
        <dbReference type="Rhea" id="RHEA:22508"/>
        <dbReference type="Rhea" id="RHEA-COMP:17339"/>
        <dbReference type="Rhea" id="RHEA-COMP:17340"/>
        <dbReference type="ChEBI" id="CHEBI:33019"/>
        <dbReference type="ChEBI" id="CHEBI:61560"/>
        <dbReference type="ChEBI" id="CHEBI:173112"/>
        <dbReference type="EC" id="2.7.7.49"/>
    </reaction>
</comment>
<comment type="catalytic activity">
    <reaction>
        <text>DNA(n) + a 2'-deoxyribonucleoside 5'-triphosphate = DNA(n+1) + diphosphate</text>
        <dbReference type="Rhea" id="RHEA:22508"/>
        <dbReference type="Rhea" id="RHEA-COMP:17339"/>
        <dbReference type="Rhea" id="RHEA-COMP:17340"/>
        <dbReference type="ChEBI" id="CHEBI:33019"/>
        <dbReference type="ChEBI" id="CHEBI:61560"/>
        <dbReference type="ChEBI" id="CHEBI:173112"/>
        <dbReference type="EC" id="2.7.7.7"/>
    </reaction>
</comment>
<comment type="catalytic activity">
    <reaction>
        <text>Endonucleolytic cleavage to 5'-phosphomonoester.</text>
        <dbReference type="EC" id="3.1.26.4"/>
    </reaction>
</comment>
<comment type="subunit">
    <text evidence="1">The capsid protein forms a homotrimer, from which the VLPs are assembled. The protease is a homodimer, whose active site consists of two apposed aspartic acid residues (By similarity).</text>
</comment>
<comment type="subcellular location">
    <subcellularLocation>
        <location>Cytoplasm</location>
    </subcellularLocation>
    <subcellularLocation>
        <location evidence="1">Nucleus</location>
    </subcellularLocation>
</comment>
<comment type="alternative products">
    <event type="ribosomal frameshifting"/>
    <isoform>
        <id>Q12141-1</id>
        <name>Transposon Ty1-GR1 Gag-Pol polyprotein</name>
        <sequence type="displayed"/>
    </isoform>
    <isoform>
        <id>Q12085-1</id>
        <name>Transposon Ty1-GR1 Gag polyprotein</name>
        <sequence type="external"/>
    </isoform>
    <text evidence="1">The Gag-Pol polyprotein is generated by a +1 ribosomal frameshift. The ratio of Gag:Gag-Pol varies between 20:1 and 5:1 (By similarity).</text>
</comment>
<comment type="domain">
    <text evidence="1">The C-terminal RNA-binding region of CA is sufficient for all its nucleocapsid-like chaperone activities.</text>
</comment>
<comment type="domain">
    <text evidence="1">Integrase core domain contains the D-x(n)-D-x(35)-E motif, named for the phylogenetically conserved glutamic acid and aspartic acid residues and the invariant 35 amino acid spacing between the second and third acidic residues. Each acidic residue of the D,D(35)E motif is independently essential for the 3'-processing and strand transfer activities of purified integrase protein (By similarity).</text>
</comment>
<comment type="PTM">
    <text evidence="1">Initially, virus-like particles (VLPs) are composed of the structural unprocessed proteins Gag and Gag-Pol, and also contain the host initiator methionine tRNA (tRNA(i)-Met) which serves as a primer for minus-strand DNA synthesis, and a dimer of genomic Ty RNA. Processing of the polyproteins occurs within the particle and proceeds by an ordered pathway, called maturation. First, the protease (PR) is released by autocatalytic cleavage of the Gag-Pol polyprotein yielding capsid protein p45 and a Pol-p154 precursor protein. This cleavage is a prerequisite for subsequent processing of Pol-p154 at the remaining sites to release the mature structural and catalytic proteins. Maturation takes place prior to the RT reaction and is required to produce transposition-competent VLPs (By similarity).</text>
</comment>
<comment type="miscellaneous">
    <text>Retrotransposons are mobile genetic entities that are able to replicate via an RNA intermediate and a reverse transcription step. In contrast to retroviruses, retrotransposons are non-infectious, lack an envelope and remain intracellular. Ty1 retrotransposons belong to the copia elements (pseudoviridae).</text>
</comment>
<comment type="miscellaneous">
    <molecule>Isoform Transposon Ty1-GR1 Gag-Pol polyprotein</molecule>
    <text>Produced by +1 ribosomal frameshifting between codon Leu-435 and Gly-436 of the YGR027W-A ORF.</text>
</comment>